<organism>
    <name type="scientific">Streptomyces coelicolor (strain ATCC BAA-471 / A3(2) / M145)</name>
    <dbReference type="NCBI Taxonomy" id="100226"/>
    <lineage>
        <taxon>Bacteria</taxon>
        <taxon>Bacillati</taxon>
        <taxon>Actinomycetota</taxon>
        <taxon>Actinomycetes</taxon>
        <taxon>Kitasatosporales</taxon>
        <taxon>Streptomycetaceae</taxon>
        <taxon>Streptomyces</taxon>
        <taxon>Streptomyces albidoflavus group</taxon>
    </lineage>
</organism>
<gene>
    <name type="primary">glkA</name>
    <name evidence="3" type="synonym">glk</name>
    <name type="ordered locus">SCO2126</name>
    <name type="ORF">SC6E10.20c</name>
</gene>
<reference key="1">
    <citation type="journal article" date="1992" name="Mol. Microbiol.">
        <title>The glucose kinase gene of Streptomyces coelicolor A3(2): its nucleotide sequence, transcriptional analysis and role in glucose repression.</title>
        <authorList>
            <person name="Angell S."/>
            <person name="Schwarz E."/>
            <person name="Bibb M.J."/>
        </authorList>
    </citation>
    <scope>NUCLEOTIDE SEQUENCE [GENOMIC DNA]</scope>
    <scope>FUNCTION</scope>
    <scope>POSSIBLE SUBUNIT</scope>
    <scope>INDUCTION</scope>
    <source>
        <strain>A3(2) / NRRL B-16638</strain>
    </source>
</reference>
<reference key="2">
    <citation type="journal article" date="2002" name="Nature">
        <title>Complete genome sequence of the model actinomycete Streptomyces coelicolor A3(2).</title>
        <authorList>
            <person name="Bentley S.D."/>
            <person name="Chater K.F."/>
            <person name="Cerdeno-Tarraga A.-M."/>
            <person name="Challis G.L."/>
            <person name="Thomson N.R."/>
            <person name="James K.D."/>
            <person name="Harris D.E."/>
            <person name="Quail M.A."/>
            <person name="Kieser H."/>
            <person name="Harper D."/>
            <person name="Bateman A."/>
            <person name="Brown S."/>
            <person name="Chandra G."/>
            <person name="Chen C.W."/>
            <person name="Collins M."/>
            <person name="Cronin A."/>
            <person name="Fraser A."/>
            <person name="Goble A."/>
            <person name="Hidalgo J."/>
            <person name="Hornsby T."/>
            <person name="Howarth S."/>
            <person name="Huang C.-H."/>
            <person name="Kieser T."/>
            <person name="Larke L."/>
            <person name="Murphy L.D."/>
            <person name="Oliver K."/>
            <person name="O'Neil S."/>
            <person name="Rabbinowitsch E."/>
            <person name="Rajandream M.A."/>
            <person name="Rutherford K.M."/>
            <person name="Rutter S."/>
            <person name="Seeger K."/>
            <person name="Saunders D."/>
            <person name="Sharp S."/>
            <person name="Squares R."/>
            <person name="Squares S."/>
            <person name="Taylor K."/>
            <person name="Warren T."/>
            <person name="Wietzorrek A."/>
            <person name="Woodward J.R."/>
            <person name="Barrell B.G."/>
            <person name="Parkhill J."/>
            <person name="Hopwood D.A."/>
        </authorList>
    </citation>
    <scope>NUCLEOTIDE SEQUENCE [LARGE SCALE GENOMIC DNA]</scope>
    <source>
        <strain>ATCC BAA-471 / A3(2) / M145</strain>
    </source>
</reference>
<feature type="chain" id="PRO_0000095677" description="Glucokinase">
    <location>
        <begin position="1"/>
        <end position="317"/>
    </location>
</feature>
<feature type="binding site" evidence="4">
    <location>
        <begin position="6"/>
        <end position="12"/>
    </location>
    <ligand>
        <name>ATP</name>
        <dbReference type="ChEBI" id="CHEBI:30616"/>
    </ligand>
</feature>
<accession>P0A4E1</accession>
<accession>P40184</accession>
<protein>
    <recommendedName>
        <fullName>Glucokinase</fullName>
        <ecNumber evidence="5">2.7.1.2</ecNumber>
    </recommendedName>
    <alternativeName>
        <fullName evidence="3">Glucose kinase</fullName>
    </alternativeName>
    <alternativeName>
        <fullName evidence="3">ORF 3</fullName>
    </alternativeName>
</protein>
<dbReference type="EC" id="2.7.1.2" evidence="5"/>
<dbReference type="EMBL" id="X65932">
    <property type="protein sequence ID" value="CAA46727.1"/>
    <property type="molecule type" value="Genomic_DNA"/>
</dbReference>
<dbReference type="EMBL" id="AL939111">
    <property type="protein sequence ID" value="CAB51974.1"/>
    <property type="molecule type" value="Genomic_DNA"/>
</dbReference>
<dbReference type="PIR" id="S26208">
    <property type="entry name" value="S26208"/>
</dbReference>
<dbReference type="RefSeq" id="NP_626383.1">
    <property type="nucleotide sequence ID" value="NC_003888.3"/>
</dbReference>
<dbReference type="RefSeq" id="WP_003976689.1">
    <property type="nucleotide sequence ID" value="NZ_VNID01000001.1"/>
</dbReference>
<dbReference type="SMR" id="P0A4E1"/>
<dbReference type="STRING" id="100226.gene:17759724"/>
<dbReference type="PaxDb" id="100226-SCO2126"/>
<dbReference type="KEGG" id="sco:SCO2126"/>
<dbReference type="PATRIC" id="fig|100226.15.peg.2161"/>
<dbReference type="eggNOG" id="COG1940">
    <property type="taxonomic scope" value="Bacteria"/>
</dbReference>
<dbReference type="HOGENOM" id="CLU_036604_0_0_11"/>
<dbReference type="InParanoid" id="P0A4E1"/>
<dbReference type="OrthoDB" id="9810372at2"/>
<dbReference type="PhylomeDB" id="P0A4E1"/>
<dbReference type="BRENDA" id="2.7.1.2">
    <property type="organism ID" value="5998"/>
</dbReference>
<dbReference type="Proteomes" id="UP000001973">
    <property type="component" value="Chromosome"/>
</dbReference>
<dbReference type="GO" id="GO:0005737">
    <property type="term" value="C:cytoplasm"/>
    <property type="evidence" value="ECO:0007669"/>
    <property type="project" value="UniProtKB-SubCell"/>
</dbReference>
<dbReference type="GO" id="GO:0005524">
    <property type="term" value="F:ATP binding"/>
    <property type="evidence" value="ECO:0007669"/>
    <property type="project" value="UniProtKB-KW"/>
</dbReference>
<dbReference type="GO" id="GO:0004340">
    <property type="term" value="F:glucokinase activity"/>
    <property type="evidence" value="ECO:0000315"/>
    <property type="project" value="CACAO"/>
</dbReference>
<dbReference type="GO" id="GO:0006096">
    <property type="term" value="P:glycolytic process"/>
    <property type="evidence" value="ECO:0007669"/>
    <property type="project" value="UniProtKB-KW"/>
</dbReference>
<dbReference type="CDD" id="cd24061">
    <property type="entry name" value="ASKHA_NBD_ROK_SgGLK-like"/>
    <property type="match status" value="1"/>
</dbReference>
<dbReference type="FunFam" id="3.30.420.40:FF:000055">
    <property type="entry name" value="Glucokinase"/>
    <property type="match status" value="1"/>
</dbReference>
<dbReference type="Gene3D" id="3.30.420.40">
    <property type="match status" value="2"/>
</dbReference>
<dbReference type="InterPro" id="IPR043129">
    <property type="entry name" value="ATPase_NBD"/>
</dbReference>
<dbReference type="InterPro" id="IPR000600">
    <property type="entry name" value="ROK"/>
</dbReference>
<dbReference type="InterPro" id="IPR049874">
    <property type="entry name" value="ROK_cs"/>
</dbReference>
<dbReference type="InterPro" id="IPR004654">
    <property type="entry name" value="ROK_glcA"/>
</dbReference>
<dbReference type="NCBIfam" id="TIGR00744">
    <property type="entry name" value="ROK_glcA_fam"/>
    <property type="match status" value="1"/>
</dbReference>
<dbReference type="PANTHER" id="PTHR18964:SF173">
    <property type="entry name" value="GLUCOKINASE"/>
    <property type="match status" value="1"/>
</dbReference>
<dbReference type="PANTHER" id="PTHR18964">
    <property type="entry name" value="ROK (REPRESSOR, ORF, KINASE) FAMILY"/>
    <property type="match status" value="1"/>
</dbReference>
<dbReference type="Pfam" id="PF00480">
    <property type="entry name" value="ROK"/>
    <property type="match status" value="1"/>
</dbReference>
<dbReference type="SUPFAM" id="SSF53067">
    <property type="entry name" value="Actin-like ATPase domain"/>
    <property type="match status" value="1"/>
</dbReference>
<dbReference type="PROSITE" id="PS01125">
    <property type="entry name" value="ROK"/>
    <property type="match status" value="1"/>
</dbReference>
<proteinExistence type="evidence at protein level"/>
<comment type="function">
    <text evidence="2 5">A probable glucose kinase (Probable). Required for glucose repression of many different genes, restores glucose kinase activity in E.coli glk mutants (PubMed:1435260).</text>
</comment>
<comment type="catalytic activity">
    <reaction evidence="5">
        <text>D-glucose + ATP = D-glucose 6-phosphate + ADP + H(+)</text>
        <dbReference type="Rhea" id="RHEA:17825"/>
        <dbReference type="ChEBI" id="CHEBI:4167"/>
        <dbReference type="ChEBI" id="CHEBI:15378"/>
        <dbReference type="ChEBI" id="CHEBI:30616"/>
        <dbReference type="ChEBI" id="CHEBI:61548"/>
        <dbReference type="ChEBI" id="CHEBI:456216"/>
        <dbReference type="EC" id="2.7.1.2"/>
    </reaction>
</comment>
<comment type="subunit">
    <text evidence="5">Homooligomer (possibly a homotetramer). Alternatively, it may form a heterotetramer of two glucokinase subunits with two ORF2 (AC P40182) proteins.</text>
</comment>
<comment type="subcellular location">
    <subcellularLocation>
        <location evidence="1">Cytoplasm</location>
    </subcellularLocation>
</comment>
<comment type="induction">
    <text evidence="2">Transcribed from its own promoter, as well as another upstream of the preceeding gene (AC P40182). Expressed when grown on glucose or galactose, levels decrease as cells enter stationary phase.</text>
</comment>
<comment type="similarity">
    <text evidence="4">Belongs to the ROK (NagC/XylR) family.</text>
</comment>
<evidence type="ECO:0000250" key="1">
    <source>
        <dbReference type="UniProtKB" id="P0A6V8"/>
    </source>
</evidence>
<evidence type="ECO:0000269" key="2">
    <source>
    </source>
</evidence>
<evidence type="ECO:0000303" key="3">
    <source>
    </source>
</evidence>
<evidence type="ECO:0000305" key="4"/>
<evidence type="ECO:0000305" key="5">
    <source>
    </source>
</evidence>
<name>GLK_STRCO</name>
<sequence length="317" mass="33062">MGLTIGVDIGGTKIAAGVVDEEGNILSTHKVPTPTTPEAIVDAIASAVEGARVGHEIVAVGIGAAGYVNRQRSTVYFAPNIDWRQEPLKEKVEARVGLPVVVENDANAAAWGEYKFGGGKGHRNVICITLGTGLGGGIIIGNKLRRGHFGVAAEFGHIRMVPDGLLCGCGSQGCWEQYASGRALVRYAKQRANATPERAEVLLALGDGTPDGIEGKHISVAARQGCPVAVDSYRELARWAGAGLADLASLFDPSAFIVGGGLSDEGDLVLDPIRKSYKRWLVGGNWRPVADVIAAQLGNKAGLVGAADLAREPDPIM</sequence>
<keyword id="KW-0067">ATP-binding</keyword>
<keyword id="KW-0963">Cytoplasm</keyword>
<keyword id="KW-0324">Glycolysis</keyword>
<keyword id="KW-0418">Kinase</keyword>
<keyword id="KW-0547">Nucleotide-binding</keyword>
<keyword id="KW-1185">Reference proteome</keyword>
<keyword id="KW-0678">Repressor</keyword>
<keyword id="KW-0808">Transferase</keyword>